<gene>
    <name evidence="1" type="primary">rpsP</name>
    <name type="ordered locus">ECSE_2893</name>
</gene>
<comment type="similarity">
    <text evidence="1">Belongs to the bacterial ribosomal protein bS16 family.</text>
</comment>
<name>RS16_ECOSE</name>
<accession>B6I631</accession>
<organism>
    <name type="scientific">Escherichia coli (strain SE11)</name>
    <dbReference type="NCBI Taxonomy" id="409438"/>
    <lineage>
        <taxon>Bacteria</taxon>
        <taxon>Pseudomonadati</taxon>
        <taxon>Pseudomonadota</taxon>
        <taxon>Gammaproteobacteria</taxon>
        <taxon>Enterobacterales</taxon>
        <taxon>Enterobacteriaceae</taxon>
        <taxon>Escherichia</taxon>
    </lineage>
</organism>
<proteinExistence type="inferred from homology"/>
<reference key="1">
    <citation type="journal article" date="2008" name="DNA Res.">
        <title>Complete genome sequence and comparative analysis of the wild-type commensal Escherichia coli strain SE11 isolated from a healthy adult.</title>
        <authorList>
            <person name="Oshima K."/>
            <person name="Toh H."/>
            <person name="Ogura Y."/>
            <person name="Sasamoto H."/>
            <person name="Morita H."/>
            <person name="Park S.-H."/>
            <person name="Ooka T."/>
            <person name="Iyoda S."/>
            <person name="Taylor T.D."/>
            <person name="Hayashi T."/>
            <person name="Itoh K."/>
            <person name="Hattori M."/>
        </authorList>
    </citation>
    <scope>NUCLEOTIDE SEQUENCE [LARGE SCALE GENOMIC DNA]</scope>
    <source>
        <strain>SE11</strain>
    </source>
</reference>
<feature type="chain" id="PRO_1000196397" description="Small ribosomal subunit protein bS16">
    <location>
        <begin position="1"/>
        <end position="82"/>
    </location>
</feature>
<keyword id="KW-0687">Ribonucleoprotein</keyword>
<keyword id="KW-0689">Ribosomal protein</keyword>
<protein>
    <recommendedName>
        <fullName evidence="1">Small ribosomal subunit protein bS16</fullName>
    </recommendedName>
    <alternativeName>
        <fullName evidence="2">30S ribosomal protein S16</fullName>
    </alternativeName>
</protein>
<evidence type="ECO:0000255" key="1">
    <source>
        <dbReference type="HAMAP-Rule" id="MF_00385"/>
    </source>
</evidence>
<evidence type="ECO:0000305" key="2"/>
<dbReference type="EMBL" id="AP009240">
    <property type="protein sequence ID" value="BAG78417.1"/>
    <property type="molecule type" value="Genomic_DNA"/>
</dbReference>
<dbReference type="RefSeq" id="WP_000256450.1">
    <property type="nucleotide sequence ID" value="NC_011415.1"/>
</dbReference>
<dbReference type="SMR" id="B6I631"/>
<dbReference type="GeneID" id="93774459"/>
<dbReference type="KEGG" id="ecy:ECSE_2893"/>
<dbReference type="HOGENOM" id="CLU_100590_5_1_6"/>
<dbReference type="Proteomes" id="UP000008199">
    <property type="component" value="Chromosome"/>
</dbReference>
<dbReference type="GO" id="GO:0005737">
    <property type="term" value="C:cytoplasm"/>
    <property type="evidence" value="ECO:0007669"/>
    <property type="project" value="UniProtKB-ARBA"/>
</dbReference>
<dbReference type="GO" id="GO:0015935">
    <property type="term" value="C:small ribosomal subunit"/>
    <property type="evidence" value="ECO:0007669"/>
    <property type="project" value="TreeGrafter"/>
</dbReference>
<dbReference type="GO" id="GO:0003735">
    <property type="term" value="F:structural constituent of ribosome"/>
    <property type="evidence" value="ECO:0007669"/>
    <property type="project" value="InterPro"/>
</dbReference>
<dbReference type="GO" id="GO:0006412">
    <property type="term" value="P:translation"/>
    <property type="evidence" value="ECO:0007669"/>
    <property type="project" value="UniProtKB-UniRule"/>
</dbReference>
<dbReference type="FunFam" id="3.30.1320.10:FF:000001">
    <property type="entry name" value="30S ribosomal protein S16"/>
    <property type="match status" value="1"/>
</dbReference>
<dbReference type="Gene3D" id="3.30.1320.10">
    <property type="match status" value="1"/>
</dbReference>
<dbReference type="HAMAP" id="MF_00385">
    <property type="entry name" value="Ribosomal_bS16"/>
    <property type="match status" value="1"/>
</dbReference>
<dbReference type="InterPro" id="IPR000307">
    <property type="entry name" value="Ribosomal_bS16"/>
</dbReference>
<dbReference type="InterPro" id="IPR020592">
    <property type="entry name" value="Ribosomal_bS16_CS"/>
</dbReference>
<dbReference type="InterPro" id="IPR023803">
    <property type="entry name" value="Ribosomal_bS16_dom_sf"/>
</dbReference>
<dbReference type="NCBIfam" id="TIGR00002">
    <property type="entry name" value="S16"/>
    <property type="match status" value="1"/>
</dbReference>
<dbReference type="PANTHER" id="PTHR12919">
    <property type="entry name" value="30S RIBOSOMAL PROTEIN S16"/>
    <property type="match status" value="1"/>
</dbReference>
<dbReference type="PANTHER" id="PTHR12919:SF20">
    <property type="entry name" value="SMALL RIBOSOMAL SUBUNIT PROTEIN BS16M"/>
    <property type="match status" value="1"/>
</dbReference>
<dbReference type="Pfam" id="PF00886">
    <property type="entry name" value="Ribosomal_S16"/>
    <property type="match status" value="1"/>
</dbReference>
<dbReference type="SUPFAM" id="SSF54565">
    <property type="entry name" value="Ribosomal protein S16"/>
    <property type="match status" value="1"/>
</dbReference>
<dbReference type="PROSITE" id="PS00732">
    <property type="entry name" value="RIBOSOMAL_S16"/>
    <property type="match status" value="1"/>
</dbReference>
<sequence length="82" mass="9191">MVTIRLARHGAKKRPFYQVVVADSRNARNGRFIERVGFFNPIASEKEEGTRLDLDRIAHWVGQGATISDRVAALIKEVNKAA</sequence>